<reference key="1">
    <citation type="journal article" date="1998" name="Nature">
        <title>The complete genome of the hyperthermophilic bacterium Aquifex aeolicus.</title>
        <authorList>
            <person name="Deckert G."/>
            <person name="Warren P.V."/>
            <person name="Gaasterland T."/>
            <person name="Young W.G."/>
            <person name="Lenox A.L."/>
            <person name="Graham D.E."/>
            <person name="Overbeek R."/>
            <person name="Snead M.A."/>
            <person name="Keller M."/>
            <person name="Aujay M."/>
            <person name="Huber R."/>
            <person name="Feldman R.A."/>
            <person name="Short J.M."/>
            <person name="Olsen G.J."/>
            <person name="Swanson R.V."/>
        </authorList>
    </citation>
    <scope>NUCLEOTIDE SEQUENCE [LARGE SCALE GENOMIC DNA]</scope>
    <source>
        <strain>VF5</strain>
    </source>
</reference>
<feature type="chain" id="PRO_0000128526" description="Large ribosomal subunit protein uL14">
    <location>
        <begin position="1"/>
        <end position="121"/>
    </location>
</feature>
<protein>
    <recommendedName>
        <fullName evidence="1">Large ribosomal subunit protein uL14</fullName>
    </recommendedName>
    <alternativeName>
        <fullName evidence="2">50S ribosomal protein L14</fullName>
    </alternativeName>
</protein>
<sequence length="121" mass="13271">MIQRQTYLNVADNSGAKKVQVIGIPYAPRKYATLGDVVTVTVKEALPQGNAKKGKIYRAIIVRTAKEVRRPDGSYIKFDDNACVLLNQYGEPLGTRVLGPIAREVRNKGFTKIASLAPEVV</sequence>
<proteinExistence type="inferred from homology"/>
<evidence type="ECO:0000255" key="1">
    <source>
        <dbReference type="HAMAP-Rule" id="MF_01367"/>
    </source>
</evidence>
<evidence type="ECO:0000305" key="2"/>
<dbReference type="EMBL" id="AE000657">
    <property type="protein sequence ID" value="AAC07531.1"/>
    <property type="molecule type" value="Genomic_DNA"/>
</dbReference>
<dbReference type="PIR" id="A70443">
    <property type="entry name" value="A70443"/>
</dbReference>
<dbReference type="RefSeq" id="NP_214136.1">
    <property type="nucleotide sequence ID" value="NC_000918.1"/>
</dbReference>
<dbReference type="RefSeq" id="WP_010881073.1">
    <property type="nucleotide sequence ID" value="NC_000918.1"/>
</dbReference>
<dbReference type="SMR" id="O67570"/>
<dbReference type="FunCoup" id="O67570">
    <property type="interactions" value="479"/>
</dbReference>
<dbReference type="STRING" id="224324.aq_1654"/>
<dbReference type="EnsemblBacteria" id="AAC07531">
    <property type="protein sequence ID" value="AAC07531"/>
    <property type="gene ID" value="aq_1654"/>
</dbReference>
<dbReference type="KEGG" id="aae:aq_1654"/>
<dbReference type="PATRIC" id="fig|224324.8.peg.1276"/>
<dbReference type="eggNOG" id="COG0093">
    <property type="taxonomic scope" value="Bacteria"/>
</dbReference>
<dbReference type="HOGENOM" id="CLU_095071_2_1_0"/>
<dbReference type="InParanoid" id="O67570"/>
<dbReference type="OrthoDB" id="9806379at2"/>
<dbReference type="Proteomes" id="UP000000798">
    <property type="component" value="Chromosome"/>
</dbReference>
<dbReference type="GO" id="GO:0022625">
    <property type="term" value="C:cytosolic large ribosomal subunit"/>
    <property type="evidence" value="ECO:0000318"/>
    <property type="project" value="GO_Central"/>
</dbReference>
<dbReference type="GO" id="GO:0070180">
    <property type="term" value="F:large ribosomal subunit rRNA binding"/>
    <property type="evidence" value="ECO:0000318"/>
    <property type="project" value="GO_Central"/>
</dbReference>
<dbReference type="GO" id="GO:0003735">
    <property type="term" value="F:structural constituent of ribosome"/>
    <property type="evidence" value="ECO:0000318"/>
    <property type="project" value="GO_Central"/>
</dbReference>
<dbReference type="GO" id="GO:0006412">
    <property type="term" value="P:translation"/>
    <property type="evidence" value="ECO:0007669"/>
    <property type="project" value="UniProtKB-UniRule"/>
</dbReference>
<dbReference type="CDD" id="cd00337">
    <property type="entry name" value="Ribosomal_uL14"/>
    <property type="match status" value="1"/>
</dbReference>
<dbReference type="FunFam" id="2.40.150.20:FF:000005">
    <property type="entry name" value="50S ribosomal protein L14"/>
    <property type="match status" value="1"/>
</dbReference>
<dbReference type="Gene3D" id="2.40.150.20">
    <property type="entry name" value="Ribosomal protein L14"/>
    <property type="match status" value="1"/>
</dbReference>
<dbReference type="HAMAP" id="MF_01367">
    <property type="entry name" value="Ribosomal_uL14"/>
    <property type="match status" value="1"/>
</dbReference>
<dbReference type="InterPro" id="IPR000218">
    <property type="entry name" value="Ribosomal_uL14"/>
</dbReference>
<dbReference type="InterPro" id="IPR005745">
    <property type="entry name" value="Ribosomal_uL14_bac-type"/>
</dbReference>
<dbReference type="InterPro" id="IPR019972">
    <property type="entry name" value="Ribosomal_uL14_CS"/>
</dbReference>
<dbReference type="InterPro" id="IPR036853">
    <property type="entry name" value="Ribosomal_uL14_sf"/>
</dbReference>
<dbReference type="NCBIfam" id="TIGR01067">
    <property type="entry name" value="rplN_bact"/>
    <property type="match status" value="1"/>
</dbReference>
<dbReference type="PANTHER" id="PTHR11761">
    <property type="entry name" value="50S/60S RIBOSOMAL PROTEIN L14/L23"/>
    <property type="match status" value="1"/>
</dbReference>
<dbReference type="PANTHER" id="PTHR11761:SF3">
    <property type="entry name" value="LARGE RIBOSOMAL SUBUNIT PROTEIN UL14M"/>
    <property type="match status" value="1"/>
</dbReference>
<dbReference type="Pfam" id="PF00238">
    <property type="entry name" value="Ribosomal_L14"/>
    <property type="match status" value="1"/>
</dbReference>
<dbReference type="SMART" id="SM01374">
    <property type="entry name" value="Ribosomal_L14"/>
    <property type="match status" value="1"/>
</dbReference>
<dbReference type="SUPFAM" id="SSF50193">
    <property type="entry name" value="Ribosomal protein L14"/>
    <property type="match status" value="1"/>
</dbReference>
<dbReference type="PROSITE" id="PS00049">
    <property type="entry name" value="RIBOSOMAL_L14"/>
    <property type="match status" value="1"/>
</dbReference>
<accession>O67570</accession>
<name>RL14_AQUAE</name>
<keyword id="KW-1185">Reference proteome</keyword>
<keyword id="KW-0687">Ribonucleoprotein</keyword>
<keyword id="KW-0689">Ribosomal protein</keyword>
<keyword id="KW-0694">RNA-binding</keyword>
<keyword id="KW-0699">rRNA-binding</keyword>
<gene>
    <name evidence="1" type="primary">rplN</name>
    <name type="ordered locus">aq_1654</name>
</gene>
<comment type="function">
    <text evidence="1">Binds to 23S rRNA. Forms part of two intersubunit bridges in the 70S ribosome.</text>
</comment>
<comment type="subunit">
    <text evidence="1">Part of the 50S ribosomal subunit. Forms a cluster with proteins L3 and L19. In the 70S ribosome, L14 and L19 interact and together make contacts with the 16S rRNA in bridges B5 and B8.</text>
</comment>
<comment type="similarity">
    <text evidence="1">Belongs to the universal ribosomal protein uL14 family.</text>
</comment>
<organism>
    <name type="scientific">Aquifex aeolicus (strain VF5)</name>
    <dbReference type="NCBI Taxonomy" id="224324"/>
    <lineage>
        <taxon>Bacteria</taxon>
        <taxon>Pseudomonadati</taxon>
        <taxon>Aquificota</taxon>
        <taxon>Aquificia</taxon>
        <taxon>Aquificales</taxon>
        <taxon>Aquificaceae</taxon>
        <taxon>Aquifex</taxon>
    </lineage>
</organism>